<gene>
    <name type="primary">surf2</name>
</gene>
<dbReference type="EMBL" id="Y15170">
    <property type="protein sequence ID" value="CAA75442.1"/>
    <property type="molecule type" value="Genomic_DNA"/>
</dbReference>
<dbReference type="STRING" id="31033.ENSTRUP00000047789"/>
<dbReference type="eggNOG" id="ENOG502RYGJ">
    <property type="taxonomic scope" value="Eukaryota"/>
</dbReference>
<dbReference type="InParanoid" id="O57589"/>
<dbReference type="Proteomes" id="UP000005226">
    <property type="component" value="Unplaced"/>
</dbReference>
<dbReference type="InterPro" id="IPR008833">
    <property type="entry name" value="Surf2"/>
</dbReference>
<dbReference type="PANTHER" id="PTHR34348">
    <property type="entry name" value="SURFEIT LOCUS PROTEIN 2"/>
    <property type="match status" value="1"/>
</dbReference>
<dbReference type="PANTHER" id="PTHR34348:SF1">
    <property type="entry name" value="SURFEIT LOCUS PROTEIN 2"/>
    <property type="match status" value="1"/>
</dbReference>
<dbReference type="Pfam" id="PF05477">
    <property type="entry name" value="SURF2"/>
    <property type="match status" value="1"/>
</dbReference>
<protein>
    <recommendedName>
        <fullName>Surfeit locus protein 2</fullName>
        <shortName>Surf-2</shortName>
    </recommendedName>
</protein>
<accession>O57589</accession>
<organism>
    <name type="scientific">Takifugu rubripes</name>
    <name type="common">Japanese pufferfish</name>
    <name type="synonym">Fugu rubripes</name>
    <dbReference type="NCBI Taxonomy" id="31033"/>
    <lineage>
        <taxon>Eukaryota</taxon>
        <taxon>Metazoa</taxon>
        <taxon>Chordata</taxon>
        <taxon>Craniata</taxon>
        <taxon>Vertebrata</taxon>
        <taxon>Euteleostomi</taxon>
        <taxon>Actinopterygii</taxon>
        <taxon>Neopterygii</taxon>
        <taxon>Teleostei</taxon>
        <taxon>Neoteleostei</taxon>
        <taxon>Acanthomorphata</taxon>
        <taxon>Eupercaria</taxon>
        <taxon>Tetraodontiformes</taxon>
        <taxon>Tetradontoidea</taxon>
        <taxon>Tetraodontidae</taxon>
        <taxon>Takifugu</taxon>
    </lineage>
</organism>
<proteinExistence type="inferred from homology"/>
<name>SURF2_TAKRU</name>
<reference key="1">
    <citation type="journal article" date="1997" name="Genome Res.">
        <title>The comparative genomic structure and sequence of the surfeit gene homologs in the puffer fish Fugu rubripes and their association with CpG-rich islands.</title>
        <authorList>
            <person name="Armes N."/>
            <person name="Gilley J."/>
            <person name="Fried M."/>
        </authorList>
    </citation>
    <scope>NUCLEOTIDE SEQUENCE [GENOMIC DNA]</scope>
</reference>
<evidence type="ECO:0000256" key="1">
    <source>
        <dbReference type="SAM" id="MobiDB-lite"/>
    </source>
</evidence>
<evidence type="ECO:0000305" key="2"/>
<sequence length="242" mass="27760">MDELPVDLKAFLLNHPFLQLTDGKKIKCTLNGHEFPCNLQELEKFTQGKKYEKLRPAADFNYRQYEPHIVASTKQPNQLFCKLTLRHLNRQPHHVLRHIHGKRFKKALSKYEDCVQKGIEFIPARLMQKRPKDAREEVSRGRTSKQGNGTWAPSSSEEDGDSEDSMSDLYPSHLFTLKSPTEATTGGDGNQEEDDFHTDDGEDMEVDTPALQKRKKAQGGGTQKKFRNNHWKSGRKKRGSVK</sequence>
<comment type="similarity">
    <text evidence="2">Belongs to the SURF2 family.</text>
</comment>
<keyword id="KW-1185">Reference proteome</keyword>
<feature type="chain" id="PRO_0000072318" description="Surfeit locus protein 2">
    <location>
        <begin position="1"/>
        <end position="242"/>
    </location>
</feature>
<feature type="region of interest" description="Disordered" evidence="1">
    <location>
        <begin position="126"/>
        <end position="242"/>
    </location>
</feature>
<feature type="compositionally biased region" description="Basic and acidic residues" evidence="1">
    <location>
        <begin position="130"/>
        <end position="140"/>
    </location>
</feature>
<feature type="compositionally biased region" description="Polar residues" evidence="1">
    <location>
        <begin position="144"/>
        <end position="153"/>
    </location>
</feature>
<feature type="compositionally biased region" description="Acidic residues" evidence="1">
    <location>
        <begin position="156"/>
        <end position="166"/>
    </location>
</feature>
<feature type="compositionally biased region" description="Acidic residues" evidence="1">
    <location>
        <begin position="190"/>
        <end position="206"/>
    </location>
</feature>
<feature type="compositionally biased region" description="Basic residues" evidence="1">
    <location>
        <begin position="224"/>
        <end position="242"/>
    </location>
</feature>